<proteinExistence type="inferred from homology"/>
<keyword id="KW-0067">ATP-binding</keyword>
<keyword id="KW-0997">Cell inner membrane</keyword>
<keyword id="KW-1003">Cell membrane</keyword>
<keyword id="KW-0963">Cytoplasm</keyword>
<keyword id="KW-0472">Membrane</keyword>
<keyword id="KW-0479">Metal-binding</keyword>
<keyword id="KW-0547">Nucleotide-binding</keyword>
<keyword id="KW-0653">Protein transport</keyword>
<keyword id="KW-1278">Translocase</keyword>
<keyword id="KW-0811">Translocation</keyword>
<keyword id="KW-0813">Transport</keyword>
<keyword id="KW-0862">Zinc</keyword>
<name>SECA_VARPS</name>
<accession>C5CXY9</accession>
<dbReference type="EC" id="7.4.2.8" evidence="1"/>
<dbReference type="EMBL" id="CP001635">
    <property type="protein sequence ID" value="ACS20845.1"/>
    <property type="molecule type" value="Genomic_DNA"/>
</dbReference>
<dbReference type="SMR" id="C5CXY9"/>
<dbReference type="STRING" id="543728.Vapar_4232"/>
<dbReference type="KEGG" id="vap:Vapar_4232"/>
<dbReference type="eggNOG" id="COG0653">
    <property type="taxonomic scope" value="Bacteria"/>
</dbReference>
<dbReference type="HOGENOM" id="CLU_005314_3_0_4"/>
<dbReference type="OrthoDB" id="9805579at2"/>
<dbReference type="GO" id="GO:0031522">
    <property type="term" value="C:cell envelope Sec protein transport complex"/>
    <property type="evidence" value="ECO:0007669"/>
    <property type="project" value="TreeGrafter"/>
</dbReference>
<dbReference type="GO" id="GO:0005829">
    <property type="term" value="C:cytosol"/>
    <property type="evidence" value="ECO:0007669"/>
    <property type="project" value="TreeGrafter"/>
</dbReference>
<dbReference type="GO" id="GO:0005886">
    <property type="term" value="C:plasma membrane"/>
    <property type="evidence" value="ECO:0007669"/>
    <property type="project" value="UniProtKB-SubCell"/>
</dbReference>
<dbReference type="GO" id="GO:0005524">
    <property type="term" value="F:ATP binding"/>
    <property type="evidence" value="ECO:0007669"/>
    <property type="project" value="UniProtKB-UniRule"/>
</dbReference>
<dbReference type="GO" id="GO:0046872">
    <property type="term" value="F:metal ion binding"/>
    <property type="evidence" value="ECO:0007669"/>
    <property type="project" value="UniProtKB-KW"/>
</dbReference>
<dbReference type="GO" id="GO:0008564">
    <property type="term" value="F:protein-exporting ATPase activity"/>
    <property type="evidence" value="ECO:0007669"/>
    <property type="project" value="UniProtKB-EC"/>
</dbReference>
<dbReference type="GO" id="GO:0065002">
    <property type="term" value="P:intracellular protein transmembrane transport"/>
    <property type="evidence" value="ECO:0007669"/>
    <property type="project" value="UniProtKB-UniRule"/>
</dbReference>
<dbReference type="GO" id="GO:0017038">
    <property type="term" value="P:protein import"/>
    <property type="evidence" value="ECO:0007669"/>
    <property type="project" value="InterPro"/>
</dbReference>
<dbReference type="GO" id="GO:0006605">
    <property type="term" value="P:protein targeting"/>
    <property type="evidence" value="ECO:0007669"/>
    <property type="project" value="UniProtKB-UniRule"/>
</dbReference>
<dbReference type="GO" id="GO:0043952">
    <property type="term" value="P:protein transport by the Sec complex"/>
    <property type="evidence" value="ECO:0007669"/>
    <property type="project" value="TreeGrafter"/>
</dbReference>
<dbReference type="CDD" id="cd17928">
    <property type="entry name" value="DEXDc_SecA"/>
    <property type="match status" value="1"/>
</dbReference>
<dbReference type="CDD" id="cd18803">
    <property type="entry name" value="SF2_C_secA"/>
    <property type="match status" value="1"/>
</dbReference>
<dbReference type="FunFam" id="3.40.50.300:FF:000081">
    <property type="entry name" value="Preprotein translocase subunit SecA"/>
    <property type="match status" value="1"/>
</dbReference>
<dbReference type="FunFam" id="3.40.50.300:FF:000113">
    <property type="entry name" value="Preprotein translocase subunit SecA"/>
    <property type="match status" value="1"/>
</dbReference>
<dbReference type="FunFam" id="3.90.1440.10:FF:000001">
    <property type="entry name" value="Preprotein translocase subunit SecA"/>
    <property type="match status" value="1"/>
</dbReference>
<dbReference type="FunFam" id="1.10.3060.10:FF:000003">
    <property type="entry name" value="Protein translocase subunit SecA"/>
    <property type="match status" value="1"/>
</dbReference>
<dbReference type="Gene3D" id="1.10.3060.10">
    <property type="entry name" value="Helical scaffold and wing domains of SecA"/>
    <property type="match status" value="1"/>
</dbReference>
<dbReference type="Gene3D" id="3.40.50.300">
    <property type="entry name" value="P-loop containing nucleotide triphosphate hydrolases"/>
    <property type="match status" value="2"/>
</dbReference>
<dbReference type="Gene3D" id="3.90.1440.10">
    <property type="entry name" value="SecA, preprotein cross-linking domain"/>
    <property type="match status" value="1"/>
</dbReference>
<dbReference type="HAMAP" id="MF_01382">
    <property type="entry name" value="SecA"/>
    <property type="match status" value="1"/>
</dbReference>
<dbReference type="InterPro" id="IPR014001">
    <property type="entry name" value="Helicase_ATP-bd"/>
</dbReference>
<dbReference type="InterPro" id="IPR001650">
    <property type="entry name" value="Helicase_C-like"/>
</dbReference>
<dbReference type="InterPro" id="IPR027417">
    <property type="entry name" value="P-loop_NTPase"/>
</dbReference>
<dbReference type="InterPro" id="IPR004027">
    <property type="entry name" value="SEC_C_motif"/>
</dbReference>
<dbReference type="InterPro" id="IPR000185">
    <property type="entry name" value="SecA"/>
</dbReference>
<dbReference type="InterPro" id="IPR020937">
    <property type="entry name" value="SecA_CS"/>
</dbReference>
<dbReference type="InterPro" id="IPR011115">
    <property type="entry name" value="SecA_DEAD"/>
</dbReference>
<dbReference type="InterPro" id="IPR014018">
    <property type="entry name" value="SecA_motor_DEAD"/>
</dbReference>
<dbReference type="InterPro" id="IPR011130">
    <property type="entry name" value="SecA_preprotein_X-link_dom"/>
</dbReference>
<dbReference type="InterPro" id="IPR044722">
    <property type="entry name" value="SecA_SF2_C"/>
</dbReference>
<dbReference type="InterPro" id="IPR011116">
    <property type="entry name" value="SecA_Wing/Scaffold"/>
</dbReference>
<dbReference type="InterPro" id="IPR036266">
    <property type="entry name" value="SecA_Wing/Scaffold_sf"/>
</dbReference>
<dbReference type="InterPro" id="IPR036670">
    <property type="entry name" value="SecA_X-link_sf"/>
</dbReference>
<dbReference type="NCBIfam" id="NF009538">
    <property type="entry name" value="PRK12904.1"/>
    <property type="match status" value="1"/>
</dbReference>
<dbReference type="NCBIfam" id="TIGR00963">
    <property type="entry name" value="secA"/>
    <property type="match status" value="1"/>
</dbReference>
<dbReference type="PANTHER" id="PTHR30612:SF0">
    <property type="entry name" value="CHLOROPLAST PROTEIN-TRANSPORTING ATPASE"/>
    <property type="match status" value="1"/>
</dbReference>
<dbReference type="PANTHER" id="PTHR30612">
    <property type="entry name" value="SECA INNER MEMBRANE COMPONENT OF SEC PROTEIN SECRETION SYSTEM"/>
    <property type="match status" value="1"/>
</dbReference>
<dbReference type="Pfam" id="PF21090">
    <property type="entry name" value="P-loop_SecA"/>
    <property type="match status" value="1"/>
</dbReference>
<dbReference type="Pfam" id="PF02810">
    <property type="entry name" value="SEC-C"/>
    <property type="match status" value="1"/>
</dbReference>
<dbReference type="Pfam" id="PF07517">
    <property type="entry name" value="SecA_DEAD"/>
    <property type="match status" value="1"/>
</dbReference>
<dbReference type="Pfam" id="PF01043">
    <property type="entry name" value="SecA_PP_bind"/>
    <property type="match status" value="1"/>
</dbReference>
<dbReference type="Pfam" id="PF07516">
    <property type="entry name" value="SecA_SW"/>
    <property type="match status" value="1"/>
</dbReference>
<dbReference type="PRINTS" id="PR00906">
    <property type="entry name" value="SECA"/>
</dbReference>
<dbReference type="SMART" id="SM00957">
    <property type="entry name" value="SecA_DEAD"/>
    <property type="match status" value="1"/>
</dbReference>
<dbReference type="SMART" id="SM00958">
    <property type="entry name" value="SecA_PP_bind"/>
    <property type="match status" value="1"/>
</dbReference>
<dbReference type="SUPFAM" id="SSF81886">
    <property type="entry name" value="Helical scaffold and wing domains of SecA"/>
    <property type="match status" value="1"/>
</dbReference>
<dbReference type="SUPFAM" id="SSF52540">
    <property type="entry name" value="P-loop containing nucleoside triphosphate hydrolases"/>
    <property type="match status" value="2"/>
</dbReference>
<dbReference type="SUPFAM" id="SSF81767">
    <property type="entry name" value="Pre-protein crosslinking domain of SecA"/>
    <property type="match status" value="1"/>
</dbReference>
<dbReference type="PROSITE" id="PS01312">
    <property type="entry name" value="SECA"/>
    <property type="match status" value="1"/>
</dbReference>
<dbReference type="PROSITE" id="PS51196">
    <property type="entry name" value="SECA_MOTOR_DEAD"/>
    <property type="match status" value="1"/>
</dbReference>
<feature type="chain" id="PRO_1000215123" description="Protein translocase subunit SecA">
    <location>
        <begin position="1"/>
        <end position="930"/>
    </location>
</feature>
<feature type="binding site" evidence="1">
    <location>
        <position position="87"/>
    </location>
    <ligand>
        <name>ATP</name>
        <dbReference type="ChEBI" id="CHEBI:30616"/>
    </ligand>
</feature>
<feature type="binding site" evidence="1">
    <location>
        <begin position="105"/>
        <end position="109"/>
    </location>
    <ligand>
        <name>ATP</name>
        <dbReference type="ChEBI" id="CHEBI:30616"/>
    </ligand>
</feature>
<feature type="binding site" evidence="1">
    <location>
        <position position="516"/>
    </location>
    <ligand>
        <name>ATP</name>
        <dbReference type="ChEBI" id="CHEBI:30616"/>
    </ligand>
</feature>
<feature type="binding site" evidence="1">
    <location>
        <position position="914"/>
    </location>
    <ligand>
        <name>Zn(2+)</name>
        <dbReference type="ChEBI" id="CHEBI:29105"/>
    </ligand>
</feature>
<feature type="binding site" evidence="1">
    <location>
        <position position="916"/>
    </location>
    <ligand>
        <name>Zn(2+)</name>
        <dbReference type="ChEBI" id="CHEBI:29105"/>
    </ligand>
</feature>
<feature type="binding site" evidence="1">
    <location>
        <position position="925"/>
    </location>
    <ligand>
        <name>Zn(2+)</name>
        <dbReference type="ChEBI" id="CHEBI:29105"/>
    </ligand>
</feature>
<feature type="binding site" evidence="1">
    <location>
        <position position="926"/>
    </location>
    <ligand>
        <name>Zn(2+)</name>
        <dbReference type="ChEBI" id="CHEBI:29105"/>
    </ligand>
</feature>
<gene>
    <name evidence="1" type="primary">secA</name>
    <name type="ordered locus">Vapar_4232</name>
</gene>
<comment type="function">
    <text evidence="1">Part of the Sec protein translocase complex. Interacts with the SecYEG preprotein conducting channel. Has a central role in coupling the hydrolysis of ATP to the transfer of proteins into and across the cell membrane, serving both as a receptor for the preprotein-SecB complex and as an ATP-driven molecular motor driving the stepwise translocation of polypeptide chains across the membrane.</text>
</comment>
<comment type="catalytic activity">
    <reaction evidence="1">
        <text>ATP + H2O + cellular proteinSide 1 = ADP + phosphate + cellular proteinSide 2.</text>
        <dbReference type="EC" id="7.4.2.8"/>
    </reaction>
</comment>
<comment type="cofactor">
    <cofactor evidence="1">
        <name>Zn(2+)</name>
        <dbReference type="ChEBI" id="CHEBI:29105"/>
    </cofactor>
    <text evidence="1">May bind 1 zinc ion per subunit.</text>
</comment>
<comment type="subunit">
    <text evidence="1">Monomer and homodimer. Part of the essential Sec protein translocation apparatus which comprises SecA, SecYEG and auxiliary proteins SecDF-YajC and YidC.</text>
</comment>
<comment type="subcellular location">
    <subcellularLocation>
        <location evidence="1">Cell inner membrane</location>
        <topology evidence="1">Peripheral membrane protein</topology>
        <orientation evidence="1">Cytoplasmic side</orientation>
    </subcellularLocation>
    <subcellularLocation>
        <location evidence="1">Cytoplasm</location>
    </subcellularLocation>
    <text evidence="1">Distribution is 50-50.</text>
</comment>
<comment type="similarity">
    <text evidence="1">Belongs to the SecA family.</text>
</comment>
<sequence length="930" mass="104599">MATNFLTQIFGSRNDRLLKQYRKTVERINALEPEFEKLSDDGLRAKTQEFKDRIAKGETLDDLLPEAFATVREGSKRVMKMRHFDVQLLGGMALHNGKIAEMRTGEGKTLTATLPVYLNALSGKGVHVVTVNDYLANRDAQWMGRLYNFLGLTVGINLPQMPREEKQQAYGSDITYGTNNEYGFDYLRDNMVYEPGDRVQRMLNYAIVDEVDSILIDEARTPLIISGQAEDHTDLYLAINKVVPLLTKQEGEADPRTGEGVTVPGDFTVDEKTHQVFLTEDGHEKAEQLLGEFKLLPEGASLYDPANITLMHHLNAALRARHLYHRDQHYVVQQGEVVIVDEFTGRLMTGRRWSDGLHQAVEAKEGVQIQAENQTLASITFQNYFRLYGKLAGMTGTADTEAYEFQEIYGLETVIIPPNRLSKRDDQLDRVYKTTREKYEAAIQDIRECYERGQPVLVGTSSIENSEIIDGLLTQAGLPHQVLNAKQHAREADIVAQAGRTKMITIATNMAGRGTDIVLGGNIEKMIEAIENDEGRDEATKAADIAHVRDEWTRDHEFVKSLGGLRIIATERHESRRIDNQLRGRSGRQGDPGSSRFYLSLDDPLMRIFAGDRVKAIMDRLKMPDGEAIEAGIVTRSIESAQRKVEARNFDIRKQLLEYDDVSNDQRKVIYQQRNDILDAADLSAQIAALREGCFTDLVRQYVPAESVEEQWDLQGLEKTLSNEWGIDMPLKQQVEAAEAVSDEDIVDMVVKAANDSFDAKVALIGQENFTQFERMVLLQSIDTHWREHLASLDYLRQGIHLRGYAQKQPKQEYKREAFELFGQLLDSVKNEVTRQLMTVRVQSGEQLEEAADALESRGENVSNITYSAPTETGEVEVRLDEENQRRIAAAGLGLGTLGAEAAAFARVGRNDPCPCGSGKKYKHCHGKLS</sequence>
<protein>
    <recommendedName>
        <fullName evidence="1">Protein translocase subunit SecA</fullName>
        <ecNumber evidence="1">7.4.2.8</ecNumber>
    </recommendedName>
</protein>
<organism>
    <name type="scientific">Variovorax paradoxus (strain S110)</name>
    <dbReference type="NCBI Taxonomy" id="543728"/>
    <lineage>
        <taxon>Bacteria</taxon>
        <taxon>Pseudomonadati</taxon>
        <taxon>Pseudomonadota</taxon>
        <taxon>Betaproteobacteria</taxon>
        <taxon>Burkholderiales</taxon>
        <taxon>Comamonadaceae</taxon>
        <taxon>Variovorax</taxon>
    </lineage>
</organism>
<evidence type="ECO:0000255" key="1">
    <source>
        <dbReference type="HAMAP-Rule" id="MF_01382"/>
    </source>
</evidence>
<reference key="1">
    <citation type="journal article" date="2011" name="J. Bacteriol.">
        <title>Complete genome sequence of the metabolically versatile plant growth-promoting endophyte, Variovorax paradoxus S110.</title>
        <authorList>
            <person name="Han J.I."/>
            <person name="Choi H.K."/>
            <person name="Lee S.W."/>
            <person name="Orwin P.M."/>
            <person name="Kim J."/>
            <person name="Laroe S.L."/>
            <person name="Kim T.G."/>
            <person name="O'Neil J."/>
            <person name="Leadbetter J.R."/>
            <person name="Lee S.Y."/>
            <person name="Hur C.G."/>
            <person name="Spain J.C."/>
            <person name="Ovchinnikova G."/>
            <person name="Goodwin L."/>
            <person name="Han C."/>
        </authorList>
    </citation>
    <scope>NUCLEOTIDE SEQUENCE [LARGE SCALE GENOMIC DNA]</scope>
    <source>
        <strain>S110</strain>
    </source>
</reference>